<organism>
    <name type="scientific">Salmonella typhi</name>
    <dbReference type="NCBI Taxonomy" id="90370"/>
    <lineage>
        <taxon>Bacteria</taxon>
        <taxon>Pseudomonadati</taxon>
        <taxon>Pseudomonadota</taxon>
        <taxon>Gammaproteobacteria</taxon>
        <taxon>Enterobacterales</taxon>
        <taxon>Enterobacteriaceae</taxon>
        <taxon>Salmonella</taxon>
    </lineage>
</organism>
<gene>
    <name evidence="2" type="primary">pyrB</name>
    <name type="ordered locus">STY4800</name>
    <name type="ordered locus">t4495</name>
</gene>
<protein>
    <recommendedName>
        <fullName evidence="2">Aspartate carbamoyltransferase catalytic subunit</fullName>
        <ecNumber evidence="2">2.1.3.2</ecNumber>
    </recommendedName>
    <alternativeName>
        <fullName evidence="2">Aspartate transcarbamylase</fullName>
        <shortName evidence="2">ATCase</shortName>
    </alternativeName>
</protein>
<evidence type="ECO:0000250" key="1"/>
<evidence type="ECO:0000255" key="2">
    <source>
        <dbReference type="HAMAP-Rule" id="MF_00001"/>
    </source>
</evidence>
<evidence type="ECO:0000305" key="3"/>
<proteinExistence type="inferred from homology"/>
<dbReference type="EC" id="2.1.3.2" evidence="2"/>
<dbReference type="EMBL" id="AL513382">
    <property type="protein sequence ID" value="CAD06921.1"/>
    <property type="molecule type" value="Genomic_DNA"/>
</dbReference>
<dbReference type="EMBL" id="AE014613">
    <property type="protein sequence ID" value="AAO71942.1"/>
    <property type="molecule type" value="Genomic_DNA"/>
</dbReference>
<dbReference type="RefSeq" id="NP_458878.1">
    <property type="nucleotide sequence ID" value="NC_003198.1"/>
</dbReference>
<dbReference type="RefSeq" id="WP_000013055.1">
    <property type="nucleotide sequence ID" value="NZ_WSUR01000016.1"/>
</dbReference>
<dbReference type="SMR" id="P0A1Z5"/>
<dbReference type="STRING" id="220341.gene:17588621"/>
<dbReference type="KEGG" id="stt:t4495"/>
<dbReference type="KEGG" id="sty:STY4800"/>
<dbReference type="PATRIC" id="fig|220341.7.peg.4906"/>
<dbReference type="eggNOG" id="COG0540">
    <property type="taxonomic scope" value="Bacteria"/>
</dbReference>
<dbReference type="HOGENOM" id="CLU_043846_1_2_6"/>
<dbReference type="OMA" id="VLIMHPG"/>
<dbReference type="OrthoDB" id="9774690at2"/>
<dbReference type="UniPathway" id="UPA00070">
    <property type="reaction ID" value="UER00116"/>
</dbReference>
<dbReference type="Proteomes" id="UP000000541">
    <property type="component" value="Chromosome"/>
</dbReference>
<dbReference type="Proteomes" id="UP000002670">
    <property type="component" value="Chromosome"/>
</dbReference>
<dbReference type="GO" id="GO:0005829">
    <property type="term" value="C:cytosol"/>
    <property type="evidence" value="ECO:0007669"/>
    <property type="project" value="TreeGrafter"/>
</dbReference>
<dbReference type="GO" id="GO:0016597">
    <property type="term" value="F:amino acid binding"/>
    <property type="evidence" value="ECO:0007669"/>
    <property type="project" value="InterPro"/>
</dbReference>
<dbReference type="GO" id="GO:0004070">
    <property type="term" value="F:aspartate carbamoyltransferase activity"/>
    <property type="evidence" value="ECO:0007669"/>
    <property type="project" value="UniProtKB-UniRule"/>
</dbReference>
<dbReference type="GO" id="GO:0006207">
    <property type="term" value="P:'de novo' pyrimidine nucleobase biosynthetic process"/>
    <property type="evidence" value="ECO:0007669"/>
    <property type="project" value="InterPro"/>
</dbReference>
<dbReference type="GO" id="GO:0044205">
    <property type="term" value="P:'de novo' UMP biosynthetic process"/>
    <property type="evidence" value="ECO:0007669"/>
    <property type="project" value="UniProtKB-UniRule"/>
</dbReference>
<dbReference type="GO" id="GO:0006520">
    <property type="term" value="P:amino acid metabolic process"/>
    <property type="evidence" value="ECO:0007669"/>
    <property type="project" value="InterPro"/>
</dbReference>
<dbReference type="FunFam" id="3.40.50.1370:FF:000001">
    <property type="entry name" value="Aspartate carbamoyltransferase"/>
    <property type="match status" value="1"/>
</dbReference>
<dbReference type="FunFam" id="3.40.50.1370:FF:000002">
    <property type="entry name" value="Aspartate carbamoyltransferase 2"/>
    <property type="match status" value="1"/>
</dbReference>
<dbReference type="Gene3D" id="3.40.50.1370">
    <property type="entry name" value="Aspartate/ornithine carbamoyltransferase"/>
    <property type="match status" value="2"/>
</dbReference>
<dbReference type="HAMAP" id="MF_00001">
    <property type="entry name" value="Asp_carb_tr"/>
    <property type="match status" value="1"/>
</dbReference>
<dbReference type="InterPro" id="IPR006132">
    <property type="entry name" value="Asp/Orn_carbamoyltranf_P-bd"/>
</dbReference>
<dbReference type="InterPro" id="IPR006130">
    <property type="entry name" value="Asp/Orn_carbamoylTrfase"/>
</dbReference>
<dbReference type="InterPro" id="IPR036901">
    <property type="entry name" value="Asp/Orn_carbamoylTrfase_sf"/>
</dbReference>
<dbReference type="InterPro" id="IPR002082">
    <property type="entry name" value="Asp_carbamoyltransf"/>
</dbReference>
<dbReference type="InterPro" id="IPR006131">
    <property type="entry name" value="Asp_carbamoyltransf_Asp/Orn-bd"/>
</dbReference>
<dbReference type="NCBIfam" id="TIGR00670">
    <property type="entry name" value="asp_carb_tr"/>
    <property type="match status" value="1"/>
</dbReference>
<dbReference type="NCBIfam" id="NF002032">
    <property type="entry name" value="PRK00856.1"/>
    <property type="match status" value="1"/>
</dbReference>
<dbReference type="PANTHER" id="PTHR45753:SF6">
    <property type="entry name" value="ASPARTATE CARBAMOYLTRANSFERASE"/>
    <property type="match status" value="1"/>
</dbReference>
<dbReference type="PANTHER" id="PTHR45753">
    <property type="entry name" value="ORNITHINE CARBAMOYLTRANSFERASE, MITOCHONDRIAL"/>
    <property type="match status" value="1"/>
</dbReference>
<dbReference type="Pfam" id="PF00185">
    <property type="entry name" value="OTCace"/>
    <property type="match status" value="1"/>
</dbReference>
<dbReference type="Pfam" id="PF02729">
    <property type="entry name" value="OTCace_N"/>
    <property type="match status" value="1"/>
</dbReference>
<dbReference type="PRINTS" id="PR00100">
    <property type="entry name" value="AOTCASE"/>
</dbReference>
<dbReference type="PRINTS" id="PR00101">
    <property type="entry name" value="ATCASE"/>
</dbReference>
<dbReference type="SUPFAM" id="SSF53671">
    <property type="entry name" value="Aspartate/ornithine carbamoyltransferase"/>
    <property type="match status" value="1"/>
</dbReference>
<dbReference type="PROSITE" id="PS00097">
    <property type="entry name" value="CARBAMOYLTRANSFERASE"/>
    <property type="match status" value="1"/>
</dbReference>
<comment type="function">
    <text evidence="2">Catalyzes the condensation of carbamoyl phosphate and aspartate to form carbamoyl aspartate and inorganic phosphate, the committed step in the de novo pyrimidine nucleotide biosynthesis pathway.</text>
</comment>
<comment type="catalytic activity">
    <reaction evidence="2">
        <text>carbamoyl phosphate + L-aspartate = N-carbamoyl-L-aspartate + phosphate + H(+)</text>
        <dbReference type="Rhea" id="RHEA:20013"/>
        <dbReference type="ChEBI" id="CHEBI:15378"/>
        <dbReference type="ChEBI" id="CHEBI:29991"/>
        <dbReference type="ChEBI" id="CHEBI:32814"/>
        <dbReference type="ChEBI" id="CHEBI:43474"/>
        <dbReference type="ChEBI" id="CHEBI:58228"/>
        <dbReference type="EC" id="2.1.3.2"/>
    </reaction>
</comment>
<comment type="pathway">
    <text evidence="2">Pyrimidine metabolism; UMP biosynthesis via de novo pathway; (S)-dihydroorotate from bicarbonate: step 2/3.</text>
</comment>
<comment type="subunit">
    <text evidence="2">Heterododecamer (2C3:3R2) of six catalytic PyrB chains organized as two trimers (C3), and six regulatory PyrI chains organized as three dimers (R2).</text>
</comment>
<comment type="similarity">
    <text evidence="2 3">Belongs to the aspartate/ornithine carbamoyltransferase superfamily. ATCase family.</text>
</comment>
<keyword id="KW-0665">Pyrimidine biosynthesis</keyword>
<keyword id="KW-0808">Transferase</keyword>
<reference key="1">
    <citation type="journal article" date="2001" name="Nature">
        <title>Complete genome sequence of a multiple drug resistant Salmonella enterica serovar Typhi CT18.</title>
        <authorList>
            <person name="Parkhill J."/>
            <person name="Dougan G."/>
            <person name="James K.D."/>
            <person name="Thomson N.R."/>
            <person name="Pickard D."/>
            <person name="Wain J."/>
            <person name="Churcher C.M."/>
            <person name="Mungall K.L."/>
            <person name="Bentley S.D."/>
            <person name="Holden M.T.G."/>
            <person name="Sebaihia M."/>
            <person name="Baker S."/>
            <person name="Basham D."/>
            <person name="Brooks K."/>
            <person name="Chillingworth T."/>
            <person name="Connerton P."/>
            <person name="Cronin A."/>
            <person name="Davis P."/>
            <person name="Davies R.M."/>
            <person name="Dowd L."/>
            <person name="White N."/>
            <person name="Farrar J."/>
            <person name="Feltwell T."/>
            <person name="Hamlin N."/>
            <person name="Haque A."/>
            <person name="Hien T.T."/>
            <person name="Holroyd S."/>
            <person name="Jagels K."/>
            <person name="Krogh A."/>
            <person name="Larsen T.S."/>
            <person name="Leather S."/>
            <person name="Moule S."/>
            <person name="O'Gaora P."/>
            <person name="Parry C."/>
            <person name="Quail M.A."/>
            <person name="Rutherford K.M."/>
            <person name="Simmonds M."/>
            <person name="Skelton J."/>
            <person name="Stevens K."/>
            <person name="Whitehead S."/>
            <person name="Barrell B.G."/>
        </authorList>
    </citation>
    <scope>NUCLEOTIDE SEQUENCE [LARGE SCALE GENOMIC DNA]</scope>
    <source>
        <strain>CT18</strain>
    </source>
</reference>
<reference key="2">
    <citation type="journal article" date="2003" name="J. Bacteriol.">
        <title>Comparative genomics of Salmonella enterica serovar Typhi strains Ty2 and CT18.</title>
        <authorList>
            <person name="Deng W."/>
            <person name="Liou S.-R."/>
            <person name="Plunkett G. III"/>
            <person name="Mayhew G.F."/>
            <person name="Rose D.J."/>
            <person name="Burland V."/>
            <person name="Kodoyianni V."/>
            <person name="Schwartz D.C."/>
            <person name="Blattner F.R."/>
        </authorList>
    </citation>
    <scope>NUCLEOTIDE SEQUENCE [LARGE SCALE GENOMIC DNA]</scope>
    <source>
        <strain>ATCC 700931 / Ty2</strain>
    </source>
</reference>
<feature type="initiator methionine" description="Removed" evidence="1">
    <location>
        <position position="1"/>
    </location>
</feature>
<feature type="chain" id="PRO_0000113188" description="Aspartate carbamoyltransferase catalytic subunit">
    <location>
        <begin position="2"/>
        <end position="311"/>
    </location>
</feature>
<feature type="binding site" evidence="2">
    <location>
        <position position="55"/>
    </location>
    <ligand>
        <name>carbamoyl phosphate</name>
        <dbReference type="ChEBI" id="CHEBI:58228"/>
    </ligand>
</feature>
<feature type="binding site" evidence="2">
    <location>
        <position position="56"/>
    </location>
    <ligand>
        <name>carbamoyl phosphate</name>
        <dbReference type="ChEBI" id="CHEBI:58228"/>
    </ligand>
</feature>
<feature type="binding site" evidence="2">
    <location>
        <position position="85"/>
    </location>
    <ligand>
        <name>L-aspartate</name>
        <dbReference type="ChEBI" id="CHEBI:29991"/>
    </ligand>
</feature>
<feature type="binding site" evidence="2">
    <location>
        <position position="106"/>
    </location>
    <ligand>
        <name>carbamoyl phosphate</name>
        <dbReference type="ChEBI" id="CHEBI:58228"/>
    </ligand>
</feature>
<feature type="binding site" evidence="2">
    <location>
        <position position="135"/>
    </location>
    <ligand>
        <name>carbamoyl phosphate</name>
        <dbReference type="ChEBI" id="CHEBI:58228"/>
    </ligand>
</feature>
<feature type="binding site" evidence="2">
    <location>
        <position position="138"/>
    </location>
    <ligand>
        <name>carbamoyl phosphate</name>
        <dbReference type="ChEBI" id="CHEBI:58228"/>
    </ligand>
</feature>
<feature type="binding site" evidence="2">
    <location>
        <position position="168"/>
    </location>
    <ligand>
        <name>L-aspartate</name>
        <dbReference type="ChEBI" id="CHEBI:29991"/>
    </ligand>
</feature>
<feature type="binding site" evidence="2">
    <location>
        <position position="230"/>
    </location>
    <ligand>
        <name>L-aspartate</name>
        <dbReference type="ChEBI" id="CHEBI:29991"/>
    </ligand>
</feature>
<feature type="binding site" evidence="2">
    <location>
        <position position="268"/>
    </location>
    <ligand>
        <name>carbamoyl phosphate</name>
        <dbReference type="ChEBI" id="CHEBI:58228"/>
    </ligand>
</feature>
<feature type="binding site" evidence="2">
    <location>
        <position position="269"/>
    </location>
    <ligand>
        <name>carbamoyl phosphate</name>
        <dbReference type="ChEBI" id="CHEBI:58228"/>
    </ligand>
</feature>
<name>PYRB_SALTI</name>
<accession>P0A1Z5</accession>
<accession>P08420</accession>
<sequence>MANPLYQKHIISINDLSRDDLNLVLATAAKLKANPQPELLKHKVIASCFFEASTRTRLSFETSMHRLGASVVGFSDSANTSLGKKGETLADTISVISTYVDAIVMRHPQEGAARLATEFSGQVPVLNAGDGSNQHPTQTLLDLFTIQETQGRLDNLHIAMVGDLKYGRTVHSLTQALAKFSGNRFYFIAPDALAMPQYILDMLDEKGMAWSLHGSIEEVMADVDILYMTRVQKERLDPSEYANVKAQFVLRASDLNGARENMKVLHPLPRIDEITTDVDKTPHAWYFQQAGNGIFARQALLALVLNSELSL</sequence>